<gene>
    <name evidence="6" type="primary">Clps</name>
</gene>
<comment type="function">
    <text evidence="4">Colipase is a cofactor of pancreatic lipase. It allows the lipase to anchor itself to the lipid-water interface. Without colipase the enzyme is washed off by bile salts, which have an inhibitory effect on the lipase.</text>
</comment>
<comment type="function">
    <text evidence="5">Enterostatin has a biological activity as a satiety signal.</text>
</comment>
<comment type="subunit">
    <text evidence="3">Forms a 1:1 stoichiometric complex with pancreatic lipase.</text>
</comment>
<comment type="subcellular location">
    <subcellularLocation>
        <location evidence="5">Secreted</location>
    </subcellularLocation>
</comment>
<comment type="tissue specificity">
    <text>Expressed by the pancreas.</text>
</comment>
<comment type="similarity">
    <text evidence="3">Belongs to the colipase family.</text>
</comment>
<name>COL_MOUSE</name>
<reference key="1">
    <citation type="submission" date="2001-08" db="EMBL/GenBank/DDBJ databases">
        <authorList>
            <person name="Zuberi A.R."/>
            <person name="Poole A.C."/>
            <person name="York B."/>
            <person name="Smith Richards B.K."/>
        </authorList>
    </citation>
    <scope>NUCLEOTIDE SEQUENCE [GENOMIC DNA / MRNA]</scope>
    <source>
        <strain>C57BL/6J</strain>
        <strain>CAST/EiJ</strain>
        <tissue>Pancreas</tissue>
    </source>
</reference>
<reference key="2">
    <citation type="journal article" date="2005" name="Science">
        <title>The transcriptional landscape of the mammalian genome.</title>
        <authorList>
            <person name="Carninci P."/>
            <person name="Kasukawa T."/>
            <person name="Katayama S."/>
            <person name="Gough J."/>
            <person name="Frith M.C."/>
            <person name="Maeda N."/>
            <person name="Oyama R."/>
            <person name="Ravasi T."/>
            <person name="Lenhard B."/>
            <person name="Wells C."/>
            <person name="Kodzius R."/>
            <person name="Shimokawa K."/>
            <person name="Bajic V.B."/>
            <person name="Brenner S.E."/>
            <person name="Batalov S."/>
            <person name="Forrest A.R."/>
            <person name="Zavolan M."/>
            <person name="Davis M.J."/>
            <person name="Wilming L.G."/>
            <person name="Aidinis V."/>
            <person name="Allen J.E."/>
            <person name="Ambesi-Impiombato A."/>
            <person name="Apweiler R."/>
            <person name="Aturaliya R.N."/>
            <person name="Bailey T.L."/>
            <person name="Bansal M."/>
            <person name="Baxter L."/>
            <person name="Beisel K.W."/>
            <person name="Bersano T."/>
            <person name="Bono H."/>
            <person name="Chalk A.M."/>
            <person name="Chiu K.P."/>
            <person name="Choudhary V."/>
            <person name="Christoffels A."/>
            <person name="Clutterbuck D.R."/>
            <person name="Crowe M.L."/>
            <person name="Dalla E."/>
            <person name="Dalrymple B.P."/>
            <person name="de Bono B."/>
            <person name="Della Gatta G."/>
            <person name="di Bernardo D."/>
            <person name="Down T."/>
            <person name="Engstrom P."/>
            <person name="Fagiolini M."/>
            <person name="Faulkner G."/>
            <person name="Fletcher C.F."/>
            <person name="Fukushima T."/>
            <person name="Furuno M."/>
            <person name="Futaki S."/>
            <person name="Gariboldi M."/>
            <person name="Georgii-Hemming P."/>
            <person name="Gingeras T.R."/>
            <person name="Gojobori T."/>
            <person name="Green R.E."/>
            <person name="Gustincich S."/>
            <person name="Harbers M."/>
            <person name="Hayashi Y."/>
            <person name="Hensch T.K."/>
            <person name="Hirokawa N."/>
            <person name="Hill D."/>
            <person name="Huminiecki L."/>
            <person name="Iacono M."/>
            <person name="Ikeo K."/>
            <person name="Iwama A."/>
            <person name="Ishikawa T."/>
            <person name="Jakt M."/>
            <person name="Kanapin A."/>
            <person name="Katoh M."/>
            <person name="Kawasawa Y."/>
            <person name="Kelso J."/>
            <person name="Kitamura H."/>
            <person name="Kitano H."/>
            <person name="Kollias G."/>
            <person name="Krishnan S.P."/>
            <person name="Kruger A."/>
            <person name="Kummerfeld S.K."/>
            <person name="Kurochkin I.V."/>
            <person name="Lareau L.F."/>
            <person name="Lazarevic D."/>
            <person name="Lipovich L."/>
            <person name="Liu J."/>
            <person name="Liuni S."/>
            <person name="McWilliam S."/>
            <person name="Madan Babu M."/>
            <person name="Madera M."/>
            <person name="Marchionni L."/>
            <person name="Matsuda H."/>
            <person name="Matsuzawa S."/>
            <person name="Miki H."/>
            <person name="Mignone F."/>
            <person name="Miyake S."/>
            <person name="Morris K."/>
            <person name="Mottagui-Tabar S."/>
            <person name="Mulder N."/>
            <person name="Nakano N."/>
            <person name="Nakauchi H."/>
            <person name="Ng P."/>
            <person name="Nilsson R."/>
            <person name="Nishiguchi S."/>
            <person name="Nishikawa S."/>
            <person name="Nori F."/>
            <person name="Ohara O."/>
            <person name="Okazaki Y."/>
            <person name="Orlando V."/>
            <person name="Pang K.C."/>
            <person name="Pavan W.J."/>
            <person name="Pavesi G."/>
            <person name="Pesole G."/>
            <person name="Petrovsky N."/>
            <person name="Piazza S."/>
            <person name="Reed J."/>
            <person name="Reid J.F."/>
            <person name="Ring B.Z."/>
            <person name="Ringwald M."/>
            <person name="Rost B."/>
            <person name="Ruan Y."/>
            <person name="Salzberg S.L."/>
            <person name="Sandelin A."/>
            <person name="Schneider C."/>
            <person name="Schoenbach C."/>
            <person name="Sekiguchi K."/>
            <person name="Semple C.A."/>
            <person name="Seno S."/>
            <person name="Sessa L."/>
            <person name="Sheng Y."/>
            <person name="Shibata Y."/>
            <person name="Shimada H."/>
            <person name="Shimada K."/>
            <person name="Silva D."/>
            <person name="Sinclair B."/>
            <person name="Sperling S."/>
            <person name="Stupka E."/>
            <person name="Sugiura K."/>
            <person name="Sultana R."/>
            <person name="Takenaka Y."/>
            <person name="Taki K."/>
            <person name="Tammoja K."/>
            <person name="Tan S.L."/>
            <person name="Tang S."/>
            <person name="Taylor M.S."/>
            <person name="Tegner J."/>
            <person name="Teichmann S.A."/>
            <person name="Ueda H.R."/>
            <person name="van Nimwegen E."/>
            <person name="Verardo R."/>
            <person name="Wei C.L."/>
            <person name="Yagi K."/>
            <person name="Yamanishi H."/>
            <person name="Zabarovsky E."/>
            <person name="Zhu S."/>
            <person name="Zimmer A."/>
            <person name="Hide W."/>
            <person name="Bult C."/>
            <person name="Grimmond S.M."/>
            <person name="Teasdale R.D."/>
            <person name="Liu E.T."/>
            <person name="Brusic V."/>
            <person name="Quackenbush J."/>
            <person name="Wahlestedt C."/>
            <person name="Mattick J.S."/>
            <person name="Hume D.A."/>
            <person name="Kai C."/>
            <person name="Sasaki D."/>
            <person name="Tomaru Y."/>
            <person name="Fukuda S."/>
            <person name="Kanamori-Katayama M."/>
            <person name="Suzuki M."/>
            <person name="Aoki J."/>
            <person name="Arakawa T."/>
            <person name="Iida J."/>
            <person name="Imamura K."/>
            <person name="Itoh M."/>
            <person name="Kato T."/>
            <person name="Kawaji H."/>
            <person name="Kawagashira N."/>
            <person name="Kawashima T."/>
            <person name="Kojima M."/>
            <person name="Kondo S."/>
            <person name="Konno H."/>
            <person name="Nakano K."/>
            <person name="Ninomiya N."/>
            <person name="Nishio T."/>
            <person name="Okada M."/>
            <person name="Plessy C."/>
            <person name="Shibata K."/>
            <person name="Shiraki T."/>
            <person name="Suzuki S."/>
            <person name="Tagami M."/>
            <person name="Waki K."/>
            <person name="Watahiki A."/>
            <person name="Okamura-Oho Y."/>
            <person name="Suzuki H."/>
            <person name="Kawai J."/>
            <person name="Hayashizaki Y."/>
        </authorList>
    </citation>
    <scope>NUCLEOTIDE SEQUENCE [LARGE SCALE MRNA]</scope>
    <source>
        <strain>C57BL/6J</strain>
        <tissue>Stomach</tissue>
    </source>
</reference>
<reference key="3">
    <citation type="journal article" date="2004" name="Genome Res.">
        <title>The status, quality, and expansion of the NIH full-length cDNA project: the Mammalian Gene Collection (MGC).</title>
        <authorList>
            <consortium name="The MGC Project Team"/>
        </authorList>
    </citation>
    <scope>NUCLEOTIDE SEQUENCE [LARGE SCALE MRNA]</scope>
    <source>
        <strain>FVB/N</strain>
        <tissue>Colon</tissue>
    </source>
</reference>
<reference key="4">
    <citation type="journal article" date="2010" name="Cell">
        <title>A tissue-specific atlas of mouse protein phosphorylation and expression.</title>
        <authorList>
            <person name="Huttlin E.L."/>
            <person name="Jedrychowski M.P."/>
            <person name="Elias J.E."/>
            <person name="Goswami T."/>
            <person name="Rad R."/>
            <person name="Beausoleil S.A."/>
            <person name="Villen J."/>
            <person name="Haas W."/>
            <person name="Sowa M.E."/>
            <person name="Gygi S.P."/>
        </authorList>
    </citation>
    <scope>IDENTIFICATION BY MASS SPECTROMETRY [LARGE SCALE ANALYSIS]</scope>
    <source>
        <tissue>Pancreas</tissue>
    </source>
</reference>
<reference key="5">
    <citation type="journal article" date="2000" name="Biochemistry">
        <title>Hydrolysis of retinyl esters by pancreatic triglyceride lipase.</title>
        <authorList>
            <person name="van Bennekum A.M."/>
            <person name="Fisher E.A."/>
            <person name="Blaner W.S."/>
            <person name="Harrison E.H."/>
        </authorList>
    </citation>
    <scope>FUNCTION</scope>
</reference>
<organism>
    <name type="scientific">Mus musculus</name>
    <name type="common">Mouse</name>
    <dbReference type="NCBI Taxonomy" id="10090"/>
    <lineage>
        <taxon>Eukaryota</taxon>
        <taxon>Metazoa</taxon>
        <taxon>Chordata</taxon>
        <taxon>Craniata</taxon>
        <taxon>Vertebrata</taxon>
        <taxon>Euteleostomi</taxon>
        <taxon>Mammalia</taxon>
        <taxon>Eutheria</taxon>
        <taxon>Euarchontoglires</taxon>
        <taxon>Glires</taxon>
        <taxon>Rodentia</taxon>
        <taxon>Myomorpha</taxon>
        <taxon>Muroidea</taxon>
        <taxon>Muridae</taxon>
        <taxon>Murinae</taxon>
        <taxon>Mus</taxon>
        <taxon>Mus</taxon>
    </lineage>
</organism>
<keyword id="KW-0222">Digestion</keyword>
<keyword id="KW-1015">Disulfide bond</keyword>
<keyword id="KW-0442">Lipid degradation</keyword>
<keyword id="KW-0443">Lipid metabolism</keyword>
<keyword id="KW-1185">Reference proteome</keyword>
<keyword id="KW-0964">Secreted</keyword>
<keyword id="KW-0732">Signal</keyword>
<sequence length="113" mass="12445">MEKVLVLLLVSLLAVAYAAPGPRGLIINLEDGEICLNSMQCKSRCCQHDTILGIARCTHKAMENSECSPKTLYGIYYRCPCERGLTCEGDRSIIGAITNTNYGICLDSRRSKQ</sequence>
<dbReference type="EMBL" id="AF414676">
    <property type="protein sequence ID" value="AAL40730.1"/>
    <property type="molecule type" value="mRNA"/>
</dbReference>
<dbReference type="EMBL" id="AF414677">
    <property type="protein sequence ID" value="AAL40731.1"/>
    <property type="molecule type" value="mRNA"/>
</dbReference>
<dbReference type="EMBL" id="AF414678">
    <property type="protein sequence ID" value="AAL40732.1"/>
    <property type="molecule type" value="Genomic_DNA"/>
</dbReference>
<dbReference type="EMBL" id="AF414679">
    <property type="protein sequence ID" value="AAL40733.1"/>
    <property type="molecule type" value="Genomic_DNA"/>
</dbReference>
<dbReference type="EMBL" id="AK008635">
    <property type="protein sequence ID" value="BAB25796.1"/>
    <property type="molecule type" value="mRNA"/>
</dbReference>
<dbReference type="EMBL" id="AK008815">
    <property type="protein sequence ID" value="BAB25909.1"/>
    <property type="molecule type" value="mRNA"/>
</dbReference>
<dbReference type="EMBL" id="AK008834">
    <property type="protein sequence ID" value="BAB25918.1"/>
    <property type="molecule type" value="mRNA"/>
</dbReference>
<dbReference type="EMBL" id="AK008839">
    <property type="protein sequence ID" value="BAB25921.1"/>
    <property type="molecule type" value="mRNA"/>
</dbReference>
<dbReference type="EMBL" id="AK008874">
    <property type="protein sequence ID" value="BAB25944.1"/>
    <property type="molecule type" value="mRNA"/>
</dbReference>
<dbReference type="EMBL" id="AK008879">
    <property type="protein sequence ID" value="BAB25947.1"/>
    <property type="molecule type" value="mRNA"/>
</dbReference>
<dbReference type="EMBL" id="AK019047">
    <property type="protein sequence ID" value="BAB31524.1"/>
    <property type="molecule type" value="mRNA"/>
</dbReference>
<dbReference type="EMBL" id="AK028141">
    <property type="protein sequence ID" value="BAC25769.1"/>
    <property type="molecule type" value="mRNA"/>
</dbReference>
<dbReference type="EMBL" id="BC042935">
    <property type="protein sequence ID" value="AAH42935.1"/>
    <property type="molecule type" value="mRNA"/>
</dbReference>
<dbReference type="CCDS" id="CCDS28581.1"/>
<dbReference type="RefSeq" id="NP_001303994.1">
    <property type="nucleotide sequence ID" value="NM_001317065.1"/>
</dbReference>
<dbReference type="RefSeq" id="NP_079745.1">
    <property type="nucleotide sequence ID" value="NM_025469.3"/>
</dbReference>
<dbReference type="SMR" id="Q9CQC2"/>
<dbReference type="FunCoup" id="Q9CQC2">
    <property type="interactions" value="43"/>
</dbReference>
<dbReference type="STRING" id="10090.ENSMUSP00000025062"/>
<dbReference type="PhosphoSitePlus" id="Q9CQC2"/>
<dbReference type="CPTAC" id="non-CPTAC-3452"/>
<dbReference type="PaxDb" id="10090-ENSMUSP00000025062"/>
<dbReference type="PeptideAtlas" id="Q9CQC2"/>
<dbReference type="ProteomicsDB" id="283345"/>
<dbReference type="Antibodypedia" id="15257">
    <property type="antibodies" value="270 antibodies from 25 providers"/>
</dbReference>
<dbReference type="DNASU" id="109791"/>
<dbReference type="Ensembl" id="ENSMUST00000025062.5">
    <property type="protein sequence ID" value="ENSMUSP00000025062.4"/>
    <property type="gene ID" value="ENSMUSG00000024225.6"/>
</dbReference>
<dbReference type="GeneID" id="109791"/>
<dbReference type="KEGG" id="mmu:109791"/>
<dbReference type="UCSC" id="uc008brf.1">
    <property type="organism name" value="mouse"/>
</dbReference>
<dbReference type="AGR" id="MGI:88421"/>
<dbReference type="CTD" id="1208"/>
<dbReference type="MGI" id="MGI:88421">
    <property type="gene designation" value="Clps"/>
</dbReference>
<dbReference type="VEuPathDB" id="HostDB:ENSMUSG00000024225"/>
<dbReference type="eggNOG" id="ENOG502S4NY">
    <property type="taxonomic scope" value="Eukaryota"/>
</dbReference>
<dbReference type="GeneTree" id="ENSGT00390000012644"/>
<dbReference type="HOGENOM" id="CLU_165591_0_0_1"/>
<dbReference type="InParanoid" id="Q9CQC2"/>
<dbReference type="OMA" id="CSPKTLY"/>
<dbReference type="OrthoDB" id="9826993at2759"/>
<dbReference type="PhylomeDB" id="Q9CQC2"/>
<dbReference type="TreeFam" id="TF336178"/>
<dbReference type="Reactome" id="R-MMU-192456">
    <property type="pathway name" value="Digestion of dietary lipid"/>
</dbReference>
<dbReference type="Reactome" id="R-MMU-975634">
    <property type="pathway name" value="Retinoid metabolism and transport"/>
</dbReference>
<dbReference type="BioGRID-ORCS" id="109791">
    <property type="hits" value="4 hits in 79 CRISPR screens"/>
</dbReference>
<dbReference type="ChiTaRS" id="Clps">
    <property type="organism name" value="mouse"/>
</dbReference>
<dbReference type="PRO" id="PR:Q9CQC2"/>
<dbReference type="Proteomes" id="UP000000589">
    <property type="component" value="Chromosome 17"/>
</dbReference>
<dbReference type="RNAct" id="Q9CQC2">
    <property type="molecule type" value="protein"/>
</dbReference>
<dbReference type="Bgee" id="ENSMUSG00000024225">
    <property type="expression patterns" value="Expressed in stomach and 40 other cell types or tissues"/>
</dbReference>
<dbReference type="ExpressionAtlas" id="Q9CQC2">
    <property type="expression patterns" value="baseline and differential"/>
</dbReference>
<dbReference type="GO" id="GO:0005576">
    <property type="term" value="C:extracellular region"/>
    <property type="evidence" value="ECO:0007669"/>
    <property type="project" value="UniProtKB-SubCell"/>
</dbReference>
<dbReference type="GO" id="GO:0008047">
    <property type="term" value="F:enzyme activator activity"/>
    <property type="evidence" value="ECO:0000315"/>
    <property type="project" value="MGI"/>
</dbReference>
<dbReference type="GO" id="GO:0035473">
    <property type="term" value="F:lipase binding"/>
    <property type="evidence" value="ECO:0007669"/>
    <property type="project" value="InterPro"/>
</dbReference>
<dbReference type="GO" id="GO:0007586">
    <property type="term" value="P:digestion"/>
    <property type="evidence" value="ECO:0007669"/>
    <property type="project" value="UniProtKB-KW"/>
</dbReference>
<dbReference type="GO" id="GO:0016042">
    <property type="term" value="P:lipid catabolic process"/>
    <property type="evidence" value="ECO:0007669"/>
    <property type="project" value="UniProtKB-KW"/>
</dbReference>
<dbReference type="GO" id="GO:0009617">
    <property type="term" value="P:response to bacterium"/>
    <property type="evidence" value="ECO:0000270"/>
    <property type="project" value="MGI"/>
</dbReference>
<dbReference type="GO" id="GO:0001523">
    <property type="term" value="P:retinoid metabolic process"/>
    <property type="evidence" value="ECO:0000315"/>
    <property type="project" value="MGI"/>
</dbReference>
<dbReference type="CDD" id="cd23011">
    <property type="entry name" value="CLPS"/>
    <property type="match status" value="1"/>
</dbReference>
<dbReference type="FunFam" id="2.10.80.10:FF:000005">
    <property type="entry name" value="Colipase"/>
    <property type="match status" value="1"/>
</dbReference>
<dbReference type="Gene3D" id="2.10.80.10">
    <property type="entry name" value="Lipase, subunit A"/>
    <property type="match status" value="1"/>
</dbReference>
<dbReference type="InterPro" id="IPR047576">
    <property type="entry name" value="CLPS_chr"/>
</dbReference>
<dbReference type="InterPro" id="IPR001981">
    <property type="entry name" value="Colipase"/>
</dbReference>
<dbReference type="InterPro" id="IPR017914">
    <property type="entry name" value="Colipase_C"/>
</dbReference>
<dbReference type="InterPro" id="IPR017915">
    <property type="entry name" value="Colipase_CS"/>
</dbReference>
<dbReference type="InterPro" id="IPR017913">
    <property type="entry name" value="Colipase_N"/>
</dbReference>
<dbReference type="PANTHER" id="PTHR10041">
    <property type="entry name" value="COLIPASE"/>
    <property type="match status" value="1"/>
</dbReference>
<dbReference type="PANTHER" id="PTHR10041:SF8">
    <property type="entry name" value="COLIPASE"/>
    <property type="match status" value="1"/>
</dbReference>
<dbReference type="Pfam" id="PF01114">
    <property type="entry name" value="Colipase"/>
    <property type="match status" value="1"/>
</dbReference>
<dbReference type="Pfam" id="PF02740">
    <property type="entry name" value="Colipase_C"/>
    <property type="match status" value="1"/>
</dbReference>
<dbReference type="PRINTS" id="PR00128">
    <property type="entry name" value="COLIPASE"/>
</dbReference>
<dbReference type="SMART" id="SM00023">
    <property type="entry name" value="COLIPASE"/>
    <property type="match status" value="1"/>
</dbReference>
<dbReference type="SUPFAM" id="SSF57190">
    <property type="entry name" value="Colipase-like"/>
    <property type="match status" value="2"/>
</dbReference>
<dbReference type="PROSITE" id="PS00121">
    <property type="entry name" value="COLIPASE_1"/>
    <property type="match status" value="1"/>
</dbReference>
<dbReference type="PROSITE" id="PS51342">
    <property type="entry name" value="COLIPASE_2"/>
    <property type="match status" value="1"/>
</dbReference>
<feature type="signal peptide" evidence="1">
    <location>
        <begin position="1"/>
        <end position="18"/>
    </location>
</feature>
<feature type="propeptide" id="PRO_0000005698" description="Enterostatin, activation peptide" evidence="2">
    <location>
        <begin position="19"/>
        <end position="23"/>
    </location>
</feature>
<feature type="chain" id="PRO_0000005699" description="Colipase">
    <location>
        <begin position="24"/>
        <end position="113"/>
    </location>
</feature>
<feature type="disulfide bond" evidence="3">
    <location>
        <begin position="35"/>
        <end position="46"/>
    </location>
</feature>
<feature type="disulfide bond" evidence="3">
    <location>
        <begin position="41"/>
        <end position="57"/>
    </location>
</feature>
<feature type="disulfide bond" evidence="3">
    <location>
        <begin position="45"/>
        <end position="79"/>
    </location>
</feature>
<feature type="disulfide bond" evidence="3">
    <location>
        <begin position="67"/>
        <end position="87"/>
    </location>
</feature>
<feature type="disulfide bond" evidence="3">
    <location>
        <begin position="81"/>
        <end position="105"/>
    </location>
</feature>
<accession>Q9CQC2</accession>
<accession>Q8VHR2</accession>
<accession>Q8VHR3</accession>
<evidence type="ECO:0000250" key="1"/>
<evidence type="ECO:0000255" key="2"/>
<evidence type="ECO:0000255" key="3">
    <source>
        <dbReference type="PROSITE-ProRule" id="PRU00674"/>
    </source>
</evidence>
<evidence type="ECO:0000269" key="4">
    <source>
    </source>
</evidence>
<evidence type="ECO:0000305" key="5"/>
<evidence type="ECO:0000312" key="6">
    <source>
        <dbReference type="MGI" id="MGI:88421"/>
    </source>
</evidence>
<protein>
    <recommendedName>
        <fullName evidence="5">Colipase</fullName>
    </recommendedName>
</protein>
<proteinExistence type="evidence at protein level"/>